<reference key="1">
    <citation type="submission" date="2005-08" db="EMBL/GenBank/DDBJ databases">
        <title>Complete sequence of chromosome 1 of Nitrosospira multiformis ATCC 25196.</title>
        <authorList>
            <person name="Copeland A."/>
            <person name="Lucas S."/>
            <person name="Lapidus A."/>
            <person name="Barry K."/>
            <person name="Detter J.C."/>
            <person name="Glavina T."/>
            <person name="Hammon N."/>
            <person name="Israni S."/>
            <person name="Pitluck S."/>
            <person name="Chain P."/>
            <person name="Malfatti S."/>
            <person name="Shin M."/>
            <person name="Vergez L."/>
            <person name="Schmutz J."/>
            <person name="Larimer F."/>
            <person name="Land M."/>
            <person name="Hauser L."/>
            <person name="Kyrpides N."/>
            <person name="Lykidis A."/>
            <person name="Richardson P."/>
        </authorList>
    </citation>
    <scope>NUCLEOTIDE SEQUENCE [LARGE SCALE GENOMIC DNA]</scope>
    <source>
        <strain>ATCC 25196 / NCIMB 11849 / C 71</strain>
    </source>
</reference>
<dbReference type="EC" id="3.6.5.n1" evidence="1"/>
<dbReference type="EMBL" id="CP000103">
    <property type="protein sequence ID" value="ABB75048.1"/>
    <property type="molecule type" value="Genomic_DNA"/>
</dbReference>
<dbReference type="SMR" id="Q2Y873"/>
<dbReference type="STRING" id="323848.Nmul_A1751"/>
<dbReference type="KEGG" id="nmu:Nmul_A1751"/>
<dbReference type="eggNOG" id="COG0481">
    <property type="taxonomic scope" value="Bacteria"/>
</dbReference>
<dbReference type="HOGENOM" id="CLU_009995_3_3_4"/>
<dbReference type="OrthoDB" id="9801472at2"/>
<dbReference type="Proteomes" id="UP000002718">
    <property type="component" value="Chromosome"/>
</dbReference>
<dbReference type="GO" id="GO:0005886">
    <property type="term" value="C:plasma membrane"/>
    <property type="evidence" value="ECO:0007669"/>
    <property type="project" value="UniProtKB-SubCell"/>
</dbReference>
<dbReference type="GO" id="GO:0005525">
    <property type="term" value="F:GTP binding"/>
    <property type="evidence" value="ECO:0007669"/>
    <property type="project" value="UniProtKB-UniRule"/>
</dbReference>
<dbReference type="GO" id="GO:0003924">
    <property type="term" value="F:GTPase activity"/>
    <property type="evidence" value="ECO:0007669"/>
    <property type="project" value="UniProtKB-UniRule"/>
</dbReference>
<dbReference type="GO" id="GO:0097216">
    <property type="term" value="F:guanosine tetraphosphate binding"/>
    <property type="evidence" value="ECO:0007669"/>
    <property type="project" value="UniProtKB-ARBA"/>
</dbReference>
<dbReference type="GO" id="GO:0043022">
    <property type="term" value="F:ribosome binding"/>
    <property type="evidence" value="ECO:0007669"/>
    <property type="project" value="UniProtKB-UniRule"/>
</dbReference>
<dbReference type="GO" id="GO:0003746">
    <property type="term" value="F:translation elongation factor activity"/>
    <property type="evidence" value="ECO:0007669"/>
    <property type="project" value="UniProtKB-UniRule"/>
</dbReference>
<dbReference type="GO" id="GO:0045727">
    <property type="term" value="P:positive regulation of translation"/>
    <property type="evidence" value="ECO:0007669"/>
    <property type="project" value="UniProtKB-UniRule"/>
</dbReference>
<dbReference type="CDD" id="cd03699">
    <property type="entry name" value="EF4_II"/>
    <property type="match status" value="1"/>
</dbReference>
<dbReference type="CDD" id="cd16260">
    <property type="entry name" value="EF4_III"/>
    <property type="match status" value="1"/>
</dbReference>
<dbReference type="CDD" id="cd01890">
    <property type="entry name" value="LepA"/>
    <property type="match status" value="1"/>
</dbReference>
<dbReference type="CDD" id="cd03709">
    <property type="entry name" value="lepA_C"/>
    <property type="match status" value="1"/>
</dbReference>
<dbReference type="FunFam" id="3.40.50.300:FF:000078">
    <property type="entry name" value="Elongation factor 4"/>
    <property type="match status" value="1"/>
</dbReference>
<dbReference type="FunFam" id="2.40.30.10:FF:000015">
    <property type="entry name" value="Translation factor GUF1, mitochondrial"/>
    <property type="match status" value="1"/>
</dbReference>
<dbReference type="FunFam" id="3.30.70.240:FF:000007">
    <property type="entry name" value="Translation factor GUF1, mitochondrial"/>
    <property type="match status" value="1"/>
</dbReference>
<dbReference type="FunFam" id="3.30.70.2570:FF:000001">
    <property type="entry name" value="Translation factor GUF1, mitochondrial"/>
    <property type="match status" value="1"/>
</dbReference>
<dbReference type="FunFam" id="3.30.70.870:FF:000004">
    <property type="entry name" value="Translation factor GUF1, mitochondrial"/>
    <property type="match status" value="1"/>
</dbReference>
<dbReference type="Gene3D" id="3.30.70.240">
    <property type="match status" value="1"/>
</dbReference>
<dbReference type="Gene3D" id="3.30.70.2570">
    <property type="entry name" value="Elongation factor 4, C-terminal domain"/>
    <property type="match status" value="1"/>
</dbReference>
<dbReference type="Gene3D" id="3.30.70.870">
    <property type="entry name" value="Elongation Factor G (Translational Gtpase), domain 3"/>
    <property type="match status" value="1"/>
</dbReference>
<dbReference type="Gene3D" id="3.40.50.300">
    <property type="entry name" value="P-loop containing nucleotide triphosphate hydrolases"/>
    <property type="match status" value="1"/>
</dbReference>
<dbReference type="Gene3D" id="2.40.30.10">
    <property type="entry name" value="Translation factors"/>
    <property type="match status" value="1"/>
</dbReference>
<dbReference type="HAMAP" id="MF_00071">
    <property type="entry name" value="LepA"/>
    <property type="match status" value="1"/>
</dbReference>
<dbReference type="InterPro" id="IPR006297">
    <property type="entry name" value="EF-4"/>
</dbReference>
<dbReference type="InterPro" id="IPR035647">
    <property type="entry name" value="EFG_III/V"/>
</dbReference>
<dbReference type="InterPro" id="IPR000640">
    <property type="entry name" value="EFG_V-like"/>
</dbReference>
<dbReference type="InterPro" id="IPR004161">
    <property type="entry name" value="EFTu-like_2"/>
</dbReference>
<dbReference type="InterPro" id="IPR031157">
    <property type="entry name" value="G_TR_CS"/>
</dbReference>
<dbReference type="InterPro" id="IPR038363">
    <property type="entry name" value="LepA_C_sf"/>
</dbReference>
<dbReference type="InterPro" id="IPR013842">
    <property type="entry name" value="LepA_CTD"/>
</dbReference>
<dbReference type="InterPro" id="IPR035654">
    <property type="entry name" value="LepA_IV"/>
</dbReference>
<dbReference type="InterPro" id="IPR027417">
    <property type="entry name" value="P-loop_NTPase"/>
</dbReference>
<dbReference type="InterPro" id="IPR005225">
    <property type="entry name" value="Small_GTP-bd"/>
</dbReference>
<dbReference type="InterPro" id="IPR000795">
    <property type="entry name" value="T_Tr_GTP-bd_dom"/>
</dbReference>
<dbReference type="InterPro" id="IPR009000">
    <property type="entry name" value="Transl_B-barrel_sf"/>
</dbReference>
<dbReference type="NCBIfam" id="TIGR01393">
    <property type="entry name" value="lepA"/>
    <property type="match status" value="1"/>
</dbReference>
<dbReference type="NCBIfam" id="TIGR00231">
    <property type="entry name" value="small_GTP"/>
    <property type="match status" value="1"/>
</dbReference>
<dbReference type="PANTHER" id="PTHR43512:SF4">
    <property type="entry name" value="TRANSLATION FACTOR GUF1 HOMOLOG, CHLOROPLASTIC"/>
    <property type="match status" value="1"/>
</dbReference>
<dbReference type="PANTHER" id="PTHR43512">
    <property type="entry name" value="TRANSLATION FACTOR GUF1-RELATED"/>
    <property type="match status" value="1"/>
</dbReference>
<dbReference type="Pfam" id="PF00679">
    <property type="entry name" value="EFG_C"/>
    <property type="match status" value="1"/>
</dbReference>
<dbReference type="Pfam" id="PF00009">
    <property type="entry name" value="GTP_EFTU"/>
    <property type="match status" value="1"/>
</dbReference>
<dbReference type="Pfam" id="PF03144">
    <property type="entry name" value="GTP_EFTU_D2"/>
    <property type="match status" value="1"/>
</dbReference>
<dbReference type="Pfam" id="PF06421">
    <property type="entry name" value="LepA_C"/>
    <property type="match status" value="1"/>
</dbReference>
<dbReference type="PRINTS" id="PR00315">
    <property type="entry name" value="ELONGATNFCT"/>
</dbReference>
<dbReference type="SMART" id="SM00838">
    <property type="entry name" value="EFG_C"/>
    <property type="match status" value="1"/>
</dbReference>
<dbReference type="SUPFAM" id="SSF54980">
    <property type="entry name" value="EF-G C-terminal domain-like"/>
    <property type="match status" value="2"/>
</dbReference>
<dbReference type="SUPFAM" id="SSF52540">
    <property type="entry name" value="P-loop containing nucleoside triphosphate hydrolases"/>
    <property type="match status" value="1"/>
</dbReference>
<dbReference type="SUPFAM" id="SSF50447">
    <property type="entry name" value="Translation proteins"/>
    <property type="match status" value="1"/>
</dbReference>
<dbReference type="PROSITE" id="PS00301">
    <property type="entry name" value="G_TR_1"/>
    <property type="match status" value="1"/>
</dbReference>
<dbReference type="PROSITE" id="PS51722">
    <property type="entry name" value="G_TR_2"/>
    <property type="match status" value="1"/>
</dbReference>
<accession>Q2Y873</accession>
<proteinExistence type="inferred from homology"/>
<keyword id="KW-0997">Cell inner membrane</keyword>
<keyword id="KW-1003">Cell membrane</keyword>
<keyword id="KW-0342">GTP-binding</keyword>
<keyword id="KW-0378">Hydrolase</keyword>
<keyword id="KW-0472">Membrane</keyword>
<keyword id="KW-0547">Nucleotide-binding</keyword>
<keyword id="KW-0648">Protein biosynthesis</keyword>
<keyword id="KW-1185">Reference proteome</keyword>
<name>LEPA_NITMU</name>
<evidence type="ECO:0000255" key="1">
    <source>
        <dbReference type="HAMAP-Rule" id="MF_00071"/>
    </source>
</evidence>
<feature type="chain" id="PRO_0000265681" description="Elongation factor 4">
    <location>
        <begin position="1"/>
        <end position="597"/>
    </location>
</feature>
<feature type="domain" description="tr-type G">
    <location>
        <begin position="2"/>
        <end position="184"/>
    </location>
</feature>
<feature type="binding site" evidence="1">
    <location>
        <begin position="14"/>
        <end position="19"/>
    </location>
    <ligand>
        <name>GTP</name>
        <dbReference type="ChEBI" id="CHEBI:37565"/>
    </ligand>
</feature>
<feature type="binding site" evidence="1">
    <location>
        <begin position="131"/>
        <end position="134"/>
    </location>
    <ligand>
        <name>GTP</name>
        <dbReference type="ChEBI" id="CHEBI:37565"/>
    </ligand>
</feature>
<comment type="function">
    <text evidence="1">Required for accurate and efficient protein synthesis under certain stress conditions. May act as a fidelity factor of the translation reaction, by catalyzing a one-codon backward translocation of tRNAs on improperly translocated ribosomes. Back-translocation proceeds from a post-translocation (POST) complex to a pre-translocation (PRE) complex, thus giving elongation factor G a second chance to translocate the tRNAs correctly. Binds to ribosomes in a GTP-dependent manner.</text>
</comment>
<comment type="catalytic activity">
    <reaction evidence="1">
        <text>GTP + H2O = GDP + phosphate + H(+)</text>
        <dbReference type="Rhea" id="RHEA:19669"/>
        <dbReference type="ChEBI" id="CHEBI:15377"/>
        <dbReference type="ChEBI" id="CHEBI:15378"/>
        <dbReference type="ChEBI" id="CHEBI:37565"/>
        <dbReference type="ChEBI" id="CHEBI:43474"/>
        <dbReference type="ChEBI" id="CHEBI:58189"/>
        <dbReference type="EC" id="3.6.5.n1"/>
    </reaction>
</comment>
<comment type="subcellular location">
    <subcellularLocation>
        <location evidence="1">Cell inner membrane</location>
        <topology evidence="1">Peripheral membrane protein</topology>
        <orientation evidence="1">Cytoplasmic side</orientation>
    </subcellularLocation>
</comment>
<comment type="similarity">
    <text evidence="1">Belongs to the TRAFAC class translation factor GTPase superfamily. Classic translation factor GTPase family. LepA subfamily.</text>
</comment>
<organism>
    <name type="scientific">Nitrosospira multiformis (strain ATCC 25196 / NCIMB 11849 / C 71)</name>
    <dbReference type="NCBI Taxonomy" id="323848"/>
    <lineage>
        <taxon>Bacteria</taxon>
        <taxon>Pseudomonadati</taxon>
        <taxon>Pseudomonadota</taxon>
        <taxon>Betaproteobacteria</taxon>
        <taxon>Nitrosomonadales</taxon>
        <taxon>Nitrosomonadaceae</taxon>
        <taxon>Nitrosospira</taxon>
    </lineage>
</organism>
<gene>
    <name evidence="1" type="primary">lepA</name>
    <name type="ordered locus">Nmul_A1751</name>
</gene>
<protein>
    <recommendedName>
        <fullName evidence="1">Elongation factor 4</fullName>
        <shortName evidence="1">EF-4</shortName>
        <ecNumber evidence="1">3.6.5.n1</ecNumber>
    </recommendedName>
    <alternativeName>
        <fullName evidence="1">Ribosomal back-translocase LepA</fullName>
    </alternativeName>
</protein>
<sequence>MQHIRNFSIIAHIDHGKSTLADRIIHLCGGLSDREMEEQVLDSMELERERGITIKAQTAALEYKSRDGSSYLLNLIDTPGHVDFSYEVSRSLAACEGALLVVDASQGVEAQTVANCYTAIEQGVEVIPVLNKIDLPAAEPERVIKEIEDIIGIEAQDAVRASAKTGVGVEDILEAVISRIPPPKGNPEAPLKALIIDSWFDNYVGVVMLVRVMDGVLKPKDRILLMASKTTHLCEQVGVFTPKSRNRESLSAGEVGFIISGIKELKSAKVGDTVTLVDRPAPQPLLGFKEIKPQVFAGLYPVESNQYDALRDALEKLKLNDSSLQYEPETSQALGFGFRCGFLGLLHLDIVQERLEREYDMNLITTAPTVVYQVVLRDGSVIEIENPSRLPDLSKIEQIREPIITATILVPQEYVGSVITLCISKRGIQKNMQYMGRQVMLTYEIPLNEVVMDFFDRLKSTSRGYASLDYEFKEFRASDLVKLDILINGERVDALSLIVHRASSQYRGRELAQKMRELIPRQMFDIAVQAAIGSHIIARESIKALRKNVLAKCYGGDITRKRKLLEKQKAGKKRMKQVGNVEIPQEAFLAILQVGEK</sequence>